<name>ACCD_METS4</name>
<keyword id="KW-0067">ATP-binding</keyword>
<keyword id="KW-0963">Cytoplasm</keyword>
<keyword id="KW-0275">Fatty acid biosynthesis</keyword>
<keyword id="KW-0276">Fatty acid metabolism</keyword>
<keyword id="KW-0444">Lipid biosynthesis</keyword>
<keyword id="KW-0443">Lipid metabolism</keyword>
<keyword id="KW-0547">Nucleotide-binding</keyword>
<keyword id="KW-0808">Transferase</keyword>
<reference key="1">
    <citation type="submission" date="2008-02" db="EMBL/GenBank/DDBJ databases">
        <title>Complete sequence of chromosome of Methylobacterium sp. 4-46.</title>
        <authorList>
            <consortium name="US DOE Joint Genome Institute"/>
            <person name="Copeland A."/>
            <person name="Lucas S."/>
            <person name="Lapidus A."/>
            <person name="Glavina del Rio T."/>
            <person name="Dalin E."/>
            <person name="Tice H."/>
            <person name="Bruce D."/>
            <person name="Goodwin L."/>
            <person name="Pitluck S."/>
            <person name="Chertkov O."/>
            <person name="Brettin T."/>
            <person name="Detter J.C."/>
            <person name="Han C."/>
            <person name="Kuske C.R."/>
            <person name="Schmutz J."/>
            <person name="Larimer F."/>
            <person name="Land M."/>
            <person name="Hauser L."/>
            <person name="Kyrpides N."/>
            <person name="Ivanova N."/>
            <person name="Marx C.J."/>
            <person name="Richardson P."/>
        </authorList>
    </citation>
    <scope>NUCLEOTIDE SEQUENCE [LARGE SCALE GENOMIC DNA]</scope>
    <source>
        <strain>4-46</strain>
    </source>
</reference>
<accession>B0UKV1</accession>
<feature type="chain" id="PRO_0000389800" description="Acetyl-coenzyme A carboxylase carboxyl transferase subunit beta">
    <location>
        <begin position="1"/>
        <end position="303"/>
    </location>
</feature>
<feature type="domain" description="CoA carboxyltransferase N-terminal" evidence="2">
    <location>
        <begin position="29"/>
        <end position="298"/>
    </location>
</feature>
<protein>
    <recommendedName>
        <fullName evidence="1">Acetyl-coenzyme A carboxylase carboxyl transferase subunit beta</fullName>
        <shortName evidence="1">ACCase subunit beta</shortName>
        <shortName evidence="1">Acetyl-CoA carboxylase carboxyltransferase subunit beta</shortName>
        <ecNumber evidence="1">2.1.3.15</ecNumber>
    </recommendedName>
</protein>
<sequence length="303" mass="33392">MKVETMNWITEVVRPRIKTLFKRETPENLWVKCPETGQMVFHKEVEAHDFVIPGSEHHLRMSAQQRLKMMFDQGTWLDVPLPEAPVDPLKFRDEKRYVDRLKDARAKTGMADAFKVGFGRVGGLPMTLAVQDFGFMGGSLGMAAGEAFVRGAETALDKRTPYVLFAASGGARMQEGILSLMQMPRTTVAVRRLNRARLPYIVVLTNPTTGGVTASYAMLGDVHLAEPGALIGFAGPRVIEQTIREKLPDGFQRAEYLREHGMIDQVVHRRDLKATVARLCGLLMQAPAATPAPASAAAQPVPA</sequence>
<gene>
    <name evidence="1" type="primary">accD</name>
    <name type="ordered locus">M446_0476</name>
</gene>
<comment type="function">
    <text evidence="1">Component of the acetyl coenzyme A carboxylase (ACC) complex. Biotin carboxylase (BC) catalyzes the carboxylation of biotin on its carrier protein (BCCP) and then the CO(2) group is transferred by the transcarboxylase to acetyl-CoA to form malonyl-CoA.</text>
</comment>
<comment type="catalytic activity">
    <reaction evidence="1">
        <text>N(6)-carboxybiotinyl-L-lysyl-[protein] + acetyl-CoA = N(6)-biotinyl-L-lysyl-[protein] + malonyl-CoA</text>
        <dbReference type="Rhea" id="RHEA:54728"/>
        <dbReference type="Rhea" id="RHEA-COMP:10505"/>
        <dbReference type="Rhea" id="RHEA-COMP:10506"/>
        <dbReference type="ChEBI" id="CHEBI:57288"/>
        <dbReference type="ChEBI" id="CHEBI:57384"/>
        <dbReference type="ChEBI" id="CHEBI:83144"/>
        <dbReference type="ChEBI" id="CHEBI:83145"/>
        <dbReference type="EC" id="2.1.3.15"/>
    </reaction>
</comment>
<comment type="pathway">
    <text evidence="1">Lipid metabolism; malonyl-CoA biosynthesis; malonyl-CoA from acetyl-CoA: step 1/1.</text>
</comment>
<comment type="subunit">
    <text evidence="1">Acetyl-CoA carboxylase is a heterohexamer composed of biotin carboxyl carrier protein (AccB), biotin carboxylase (AccC) and two subunits each of ACCase subunit alpha (AccA) and ACCase subunit beta (AccD).</text>
</comment>
<comment type="subcellular location">
    <subcellularLocation>
        <location evidence="1">Cytoplasm</location>
    </subcellularLocation>
</comment>
<comment type="similarity">
    <text evidence="1">Belongs to the AccD/PCCB family.</text>
</comment>
<proteinExistence type="inferred from homology"/>
<evidence type="ECO:0000255" key="1">
    <source>
        <dbReference type="HAMAP-Rule" id="MF_01395"/>
    </source>
</evidence>
<evidence type="ECO:0000255" key="2">
    <source>
        <dbReference type="PROSITE-ProRule" id="PRU01136"/>
    </source>
</evidence>
<dbReference type="EC" id="2.1.3.15" evidence="1"/>
<dbReference type="EMBL" id="CP000943">
    <property type="protein sequence ID" value="ACA15040.1"/>
    <property type="molecule type" value="Genomic_DNA"/>
</dbReference>
<dbReference type="RefSeq" id="WP_012330457.1">
    <property type="nucleotide sequence ID" value="NC_010511.1"/>
</dbReference>
<dbReference type="SMR" id="B0UKV1"/>
<dbReference type="STRING" id="426117.M446_0476"/>
<dbReference type="KEGG" id="met:M446_0476"/>
<dbReference type="eggNOG" id="COG0777">
    <property type="taxonomic scope" value="Bacteria"/>
</dbReference>
<dbReference type="HOGENOM" id="CLU_015486_1_0_5"/>
<dbReference type="UniPathway" id="UPA00655">
    <property type="reaction ID" value="UER00711"/>
</dbReference>
<dbReference type="GO" id="GO:0009329">
    <property type="term" value="C:acetate CoA-transferase complex"/>
    <property type="evidence" value="ECO:0007669"/>
    <property type="project" value="TreeGrafter"/>
</dbReference>
<dbReference type="GO" id="GO:0003989">
    <property type="term" value="F:acetyl-CoA carboxylase activity"/>
    <property type="evidence" value="ECO:0007669"/>
    <property type="project" value="InterPro"/>
</dbReference>
<dbReference type="GO" id="GO:0005524">
    <property type="term" value="F:ATP binding"/>
    <property type="evidence" value="ECO:0007669"/>
    <property type="project" value="UniProtKB-KW"/>
</dbReference>
<dbReference type="GO" id="GO:0016743">
    <property type="term" value="F:carboxyl- or carbamoyltransferase activity"/>
    <property type="evidence" value="ECO:0007669"/>
    <property type="project" value="UniProtKB-UniRule"/>
</dbReference>
<dbReference type="GO" id="GO:0006633">
    <property type="term" value="P:fatty acid biosynthetic process"/>
    <property type="evidence" value="ECO:0007669"/>
    <property type="project" value="UniProtKB-KW"/>
</dbReference>
<dbReference type="GO" id="GO:2001295">
    <property type="term" value="P:malonyl-CoA biosynthetic process"/>
    <property type="evidence" value="ECO:0007669"/>
    <property type="project" value="UniProtKB-UniRule"/>
</dbReference>
<dbReference type="Gene3D" id="3.90.226.10">
    <property type="entry name" value="2-enoyl-CoA Hydratase, Chain A, domain 1"/>
    <property type="match status" value="1"/>
</dbReference>
<dbReference type="HAMAP" id="MF_01395">
    <property type="entry name" value="AcetylCoA_CT_beta"/>
    <property type="match status" value="1"/>
</dbReference>
<dbReference type="InterPro" id="IPR034733">
    <property type="entry name" value="AcCoA_carboxyl_beta"/>
</dbReference>
<dbReference type="InterPro" id="IPR000438">
    <property type="entry name" value="Acetyl_CoA_COase_Trfase_b_su"/>
</dbReference>
<dbReference type="InterPro" id="IPR029045">
    <property type="entry name" value="ClpP/crotonase-like_dom_sf"/>
</dbReference>
<dbReference type="InterPro" id="IPR011762">
    <property type="entry name" value="COA_CT_N"/>
</dbReference>
<dbReference type="NCBIfam" id="TIGR00515">
    <property type="entry name" value="accD"/>
    <property type="match status" value="1"/>
</dbReference>
<dbReference type="PANTHER" id="PTHR42995">
    <property type="entry name" value="ACETYL-COENZYME A CARBOXYLASE CARBOXYL TRANSFERASE SUBUNIT BETA, CHLOROPLASTIC"/>
    <property type="match status" value="1"/>
</dbReference>
<dbReference type="PANTHER" id="PTHR42995:SF5">
    <property type="entry name" value="ACETYL-COENZYME A CARBOXYLASE CARBOXYL TRANSFERASE SUBUNIT BETA, CHLOROPLASTIC"/>
    <property type="match status" value="1"/>
</dbReference>
<dbReference type="Pfam" id="PF01039">
    <property type="entry name" value="Carboxyl_trans"/>
    <property type="match status" value="1"/>
</dbReference>
<dbReference type="PRINTS" id="PR01070">
    <property type="entry name" value="ACCCTRFRASEB"/>
</dbReference>
<dbReference type="SUPFAM" id="SSF52096">
    <property type="entry name" value="ClpP/crotonase"/>
    <property type="match status" value="1"/>
</dbReference>
<dbReference type="PROSITE" id="PS50980">
    <property type="entry name" value="COA_CT_NTER"/>
    <property type="match status" value="1"/>
</dbReference>
<organism>
    <name type="scientific">Methylobacterium sp. (strain 4-46)</name>
    <dbReference type="NCBI Taxonomy" id="426117"/>
    <lineage>
        <taxon>Bacteria</taxon>
        <taxon>Pseudomonadati</taxon>
        <taxon>Pseudomonadota</taxon>
        <taxon>Alphaproteobacteria</taxon>
        <taxon>Hyphomicrobiales</taxon>
        <taxon>Methylobacteriaceae</taxon>
        <taxon>Methylobacterium</taxon>
    </lineage>
</organism>